<accession>A8A118</accession>
<gene>
    <name evidence="1" type="primary">mntP</name>
    <name type="synonym">yebN</name>
    <name type="ordered locus">EcHS_A1911</name>
</gene>
<protein>
    <recommendedName>
        <fullName evidence="1">Probable manganese efflux pump MntP</fullName>
    </recommendedName>
</protein>
<feature type="chain" id="PRO_1000068635" description="Probable manganese efflux pump MntP">
    <location>
        <begin position="1"/>
        <end position="188"/>
    </location>
</feature>
<feature type="transmembrane region" description="Helical" evidence="1">
    <location>
        <begin position="3"/>
        <end position="23"/>
    </location>
</feature>
<feature type="transmembrane region" description="Helical" evidence="1">
    <location>
        <begin position="66"/>
        <end position="86"/>
    </location>
</feature>
<feature type="transmembrane region" description="Helical" evidence="1">
    <location>
        <begin position="106"/>
        <end position="128"/>
    </location>
</feature>
<feature type="transmembrane region" description="Helical" evidence="1">
    <location>
        <begin position="143"/>
        <end position="163"/>
    </location>
</feature>
<feature type="transmembrane region" description="Helical" evidence="1">
    <location>
        <begin position="168"/>
        <end position="188"/>
    </location>
</feature>
<keyword id="KW-0997">Cell inner membrane</keyword>
<keyword id="KW-1003">Cell membrane</keyword>
<keyword id="KW-0406">Ion transport</keyword>
<keyword id="KW-0464">Manganese</keyword>
<keyword id="KW-0472">Membrane</keyword>
<keyword id="KW-0812">Transmembrane</keyword>
<keyword id="KW-1133">Transmembrane helix</keyword>
<keyword id="KW-0813">Transport</keyword>
<evidence type="ECO:0000255" key="1">
    <source>
        <dbReference type="HAMAP-Rule" id="MF_01521"/>
    </source>
</evidence>
<proteinExistence type="inferred from homology"/>
<organism>
    <name type="scientific">Escherichia coli O9:H4 (strain HS)</name>
    <dbReference type="NCBI Taxonomy" id="331112"/>
    <lineage>
        <taxon>Bacteria</taxon>
        <taxon>Pseudomonadati</taxon>
        <taxon>Pseudomonadota</taxon>
        <taxon>Gammaproteobacteria</taxon>
        <taxon>Enterobacterales</taxon>
        <taxon>Enterobacteriaceae</taxon>
        <taxon>Escherichia</taxon>
    </lineage>
</organism>
<sequence>MNITATVLLAFGMSMDAFAASIGKGATLHKPKFSEALRTGLIFGAVETLTPLIGWGMGMLASRFVLEWNHWIAFVLLIFLGGRMIIEGFRGADDEDEEPRRRHGFWLLVTTAIATSLDAMAVGVGLAFLQVNIIATALAIGCATLIMSTLGMMVGRFIGSIIGKKAEILGGLVLIGIGVQILWTHFHG</sequence>
<dbReference type="EMBL" id="CP000802">
    <property type="protein sequence ID" value="ABV06222.1"/>
    <property type="molecule type" value="Genomic_DNA"/>
</dbReference>
<dbReference type="RefSeq" id="WP_001296134.1">
    <property type="nucleotide sequence ID" value="NC_009800.1"/>
</dbReference>
<dbReference type="GeneID" id="93776070"/>
<dbReference type="KEGG" id="ecx:EcHS_A1911"/>
<dbReference type="HOGENOM" id="CLU_096410_0_0_6"/>
<dbReference type="GO" id="GO:0005886">
    <property type="term" value="C:plasma membrane"/>
    <property type="evidence" value="ECO:0007669"/>
    <property type="project" value="UniProtKB-SubCell"/>
</dbReference>
<dbReference type="GO" id="GO:0005384">
    <property type="term" value="F:manganese ion transmembrane transporter activity"/>
    <property type="evidence" value="ECO:0007669"/>
    <property type="project" value="UniProtKB-UniRule"/>
</dbReference>
<dbReference type="HAMAP" id="MF_01521">
    <property type="entry name" value="MntP_pump"/>
    <property type="match status" value="1"/>
</dbReference>
<dbReference type="InterPro" id="IPR003810">
    <property type="entry name" value="Mntp/YtaF"/>
</dbReference>
<dbReference type="InterPro" id="IPR022929">
    <property type="entry name" value="Put_MntP"/>
</dbReference>
<dbReference type="NCBIfam" id="NF008546">
    <property type="entry name" value="PRK11469.1"/>
    <property type="match status" value="1"/>
</dbReference>
<dbReference type="PANTHER" id="PTHR35529">
    <property type="entry name" value="MANGANESE EFFLUX PUMP MNTP-RELATED"/>
    <property type="match status" value="1"/>
</dbReference>
<dbReference type="PANTHER" id="PTHR35529:SF1">
    <property type="entry name" value="MANGANESE EFFLUX PUMP MNTP-RELATED"/>
    <property type="match status" value="1"/>
</dbReference>
<dbReference type="Pfam" id="PF02659">
    <property type="entry name" value="Mntp"/>
    <property type="match status" value="1"/>
</dbReference>
<name>MNTP_ECOHS</name>
<reference key="1">
    <citation type="journal article" date="2008" name="J. Bacteriol.">
        <title>The pangenome structure of Escherichia coli: comparative genomic analysis of E. coli commensal and pathogenic isolates.</title>
        <authorList>
            <person name="Rasko D.A."/>
            <person name="Rosovitz M.J."/>
            <person name="Myers G.S.A."/>
            <person name="Mongodin E.F."/>
            <person name="Fricke W.F."/>
            <person name="Gajer P."/>
            <person name="Crabtree J."/>
            <person name="Sebaihia M."/>
            <person name="Thomson N.R."/>
            <person name="Chaudhuri R."/>
            <person name="Henderson I.R."/>
            <person name="Sperandio V."/>
            <person name="Ravel J."/>
        </authorList>
    </citation>
    <scope>NUCLEOTIDE SEQUENCE [LARGE SCALE GENOMIC DNA]</scope>
    <source>
        <strain>HS</strain>
    </source>
</reference>
<comment type="function">
    <text evidence="1">Probably functions as a manganese efflux pump.</text>
</comment>
<comment type="subcellular location">
    <subcellularLocation>
        <location evidence="1">Cell inner membrane</location>
        <topology evidence="1">Multi-pass membrane protein</topology>
    </subcellularLocation>
</comment>
<comment type="similarity">
    <text evidence="1">Belongs to the MntP (TC 9.B.29) family.</text>
</comment>